<evidence type="ECO:0000255" key="1"/>
<evidence type="ECO:0000256" key="2">
    <source>
        <dbReference type="SAM" id="MobiDB-lite"/>
    </source>
</evidence>
<evidence type="ECO:0000269" key="3">
    <source>
    </source>
</evidence>
<evidence type="ECO:0000269" key="4">
    <source>
    </source>
</evidence>
<evidence type="ECO:0000269" key="5">
    <source>
    </source>
</evidence>
<evidence type="ECO:0000269" key="6">
    <source>
    </source>
</evidence>
<evidence type="ECO:0000305" key="7"/>
<accession>O65020</accession>
<accession>F4J4J0</accession>
<accession>Q6PWY3</accession>
<organism>
    <name type="scientific">Arabidopsis thaliana</name>
    <name type="common">Mouse-ear cress</name>
    <dbReference type="NCBI Taxonomy" id="3702"/>
    <lineage>
        <taxon>Eukaryota</taxon>
        <taxon>Viridiplantae</taxon>
        <taxon>Streptophyta</taxon>
        <taxon>Embryophyta</taxon>
        <taxon>Tracheophyta</taxon>
        <taxon>Spermatophyta</taxon>
        <taxon>Magnoliopsida</taxon>
        <taxon>eudicotyledons</taxon>
        <taxon>Gunneridae</taxon>
        <taxon>Pentapetalae</taxon>
        <taxon>rosids</taxon>
        <taxon>malvids</taxon>
        <taxon>Brassicales</taxon>
        <taxon>Brassicaceae</taxon>
        <taxon>Camelineae</taxon>
        <taxon>Arabidopsis</taxon>
    </lineage>
</organism>
<feature type="chain" id="PRO_0000106289" description="Ethylene-overproduction protein 1">
    <location>
        <begin position="1"/>
        <end position="951"/>
    </location>
</feature>
<feature type="domain" description="BTB">
    <location>
        <begin position="242"/>
        <end position="342"/>
    </location>
</feature>
<feature type="repeat" description="TPR 1">
    <location>
        <begin position="443"/>
        <end position="476"/>
    </location>
</feature>
<feature type="repeat" description="TPR 2">
    <location>
        <begin position="539"/>
        <end position="572"/>
    </location>
</feature>
<feature type="repeat" description="TPR 3">
    <location>
        <begin position="573"/>
        <end position="605"/>
    </location>
</feature>
<feature type="repeat" description="TPR 4">
    <location>
        <begin position="698"/>
        <end position="731"/>
    </location>
</feature>
<feature type="repeat" description="TPR 5">
    <location>
        <begin position="772"/>
        <end position="805"/>
    </location>
</feature>
<feature type="repeat" description="TPR 6">
    <location>
        <begin position="807"/>
        <end position="837"/>
    </location>
</feature>
<feature type="repeat" description="TPR 7">
    <location>
        <begin position="868"/>
        <end position="901"/>
    </location>
</feature>
<feature type="repeat" description="TPR 8">
    <location>
        <begin position="903"/>
        <end position="934"/>
    </location>
</feature>
<feature type="region of interest" description="Disordered" evidence="2">
    <location>
        <begin position="15"/>
        <end position="52"/>
    </location>
</feature>
<feature type="coiled-coil region" evidence="1">
    <location>
        <begin position="815"/>
        <end position="854"/>
    </location>
</feature>
<feature type="compositionally biased region" description="Gly residues" evidence="2">
    <location>
        <begin position="33"/>
        <end position="50"/>
    </location>
</feature>
<feature type="mutagenesis site" description="In eto1-5; induces overproduction of ethylene due to higher stability of ACS5." evidence="3">
    <original>F</original>
    <variation>I</variation>
    <location>
        <position position="466"/>
    </location>
</feature>
<feature type="sequence conflict" description="In Ref. 3; AEE78840." evidence="7" ref="3">
    <original>T</original>
    <variation>S</variation>
    <location>
        <position position="34"/>
    </location>
</feature>
<comment type="function">
    <text evidence="3 5 6">Essential regulator of the ethylene pathway, which acts by regulating the stability of 1-aminocyclopropane-1-carboxylate synthase (ACS) enzymes. May act as a substrate-specific adapter that connects ACS enzymes, such as ACS5, to ubiquitin ligase complexes, leading to proteasomal degradation of ACS enzymes.</text>
</comment>
<comment type="pathway">
    <text>Protein modification; protein ubiquitination.</text>
</comment>
<comment type="subunit">
    <text evidence="3 6">Interacts with the C-terminal domain of ACS4, ACS5 and ACS9. Interacts with CUL3A. Putative component of a ubiquitin ligase complex containing CUL3.</text>
</comment>
<comment type="interaction">
    <interactant intactId="EBI-593440">
        <id>O65020</id>
    </interactant>
    <interactant intactId="EBI-593450">
        <id>Q37001</id>
        <label>ACS5</label>
    </interactant>
    <organismsDiffer>false</organismsDiffer>
    <experiments>3</experiments>
</comment>
<comment type="alternative products">
    <event type="alternative splicing"/>
    <isoform>
        <id>O65020-1</id>
        <name>1</name>
        <sequence type="displayed"/>
    </isoform>
    <text>A number of isoforms are produced. According to EST sequences.</text>
</comment>
<comment type="tissue specificity">
    <text evidence="6">Predominantly expressed in flowers.</text>
</comment>
<comment type="domain">
    <text evidence="4">The BTB/POZ-like domain may mediate the interaction with some component of ubiquitin ligase complexes.</text>
</comment>
<comment type="disruption phenotype">
    <text evidence="6">Compact rosette with smaller leaves, reduced petiole lengths and shorter inflorescences.</text>
</comment>
<comment type="similarity">
    <text evidence="7">Belongs to the ETO1 family.</text>
</comment>
<comment type="sequence caution" evidence="7">
    <conflict type="erroneous gene model prediction">
        <sequence resource="EMBL-CDS" id="AAC14404"/>
    </conflict>
</comment>
<comment type="sequence caution" evidence="7">
    <conflict type="erroneous initiation">
        <sequence resource="EMBL-CDS" id="AAC14404"/>
    </conflict>
    <text>Extended N-terminus.</text>
</comment>
<protein>
    <recommendedName>
        <fullName>Ethylene-overproduction protein 1</fullName>
    </recommendedName>
    <alternativeName>
        <fullName>Protein ETHYLENE OVERPRODUCER 1</fullName>
        <shortName>Protein ETO1</shortName>
    </alternativeName>
</protein>
<dbReference type="EMBL" id="AY572791">
    <property type="protein sequence ID" value="AAT01656.1"/>
    <property type="molecule type" value="mRNA"/>
</dbReference>
<dbReference type="EMBL" id="AF049236">
    <property type="protein sequence ID" value="AAC14404.1"/>
    <property type="status" value="ALT_SEQ"/>
    <property type="molecule type" value="Genomic_DNA"/>
</dbReference>
<dbReference type="EMBL" id="CP002686">
    <property type="protein sequence ID" value="AEE78840.1"/>
    <property type="molecule type" value="Genomic_DNA"/>
</dbReference>
<dbReference type="PIR" id="T51148">
    <property type="entry name" value="T51148"/>
</dbReference>
<dbReference type="RefSeq" id="NP_190745.6">
    <property type="nucleotide sequence ID" value="NM_115036.7"/>
</dbReference>
<dbReference type="SMR" id="O65020"/>
<dbReference type="BioGRID" id="9658">
    <property type="interactions" value="3"/>
</dbReference>
<dbReference type="FunCoup" id="O65020">
    <property type="interactions" value="1"/>
</dbReference>
<dbReference type="IntAct" id="O65020">
    <property type="interactions" value="1"/>
</dbReference>
<dbReference type="STRING" id="3702.O65020"/>
<dbReference type="GlyGen" id="O65020">
    <property type="glycosylation" value="2 sites"/>
</dbReference>
<dbReference type="PaxDb" id="3702-AT3G51770.2"/>
<dbReference type="PeptideAtlas" id="O65020"/>
<dbReference type="ProteomicsDB" id="222297">
    <molecule id="O65020-1"/>
</dbReference>
<dbReference type="GeneID" id="824340"/>
<dbReference type="KEGG" id="ath:AT3G51770"/>
<dbReference type="Araport" id="AT3G51770"/>
<dbReference type="TAIR" id="AT3G51770">
    <property type="gene designation" value="ETO1"/>
</dbReference>
<dbReference type="eggNOG" id="ENOG502QPQB">
    <property type="taxonomic scope" value="Eukaryota"/>
</dbReference>
<dbReference type="HOGENOM" id="CLU_015650_0_0_1"/>
<dbReference type="InParanoid" id="O65020"/>
<dbReference type="PhylomeDB" id="O65020"/>
<dbReference type="UniPathway" id="UPA00143"/>
<dbReference type="PRO" id="PR:O65020"/>
<dbReference type="Proteomes" id="UP000006548">
    <property type="component" value="Chromosome 3"/>
</dbReference>
<dbReference type="ExpressionAtlas" id="O65020">
    <property type="expression patterns" value="baseline and differential"/>
</dbReference>
<dbReference type="GO" id="GO:0009873">
    <property type="term" value="P:ethylene-activated signaling pathway"/>
    <property type="evidence" value="ECO:0007669"/>
    <property type="project" value="UniProtKB-KW"/>
</dbReference>
<dbReference type="GO" id="GO:0010105">
    <property type="term" value="P:negative regulation of ethylene-activated signaling pathway"/>
    <property type="evidence" value="ECO:0007669"/>
    <property type="project" value="InterPro"/>
</dbReference>
<dbReference type="GO" id="GO:0016567">
    <property type="term" value="P:protein ubiquitination"/>
    <property type="evidence" value="ECO:0007669"/>
    <property type="project" value="UniProtKB-UniPathway"/>
</dbReference>
<dbReference type="CDD" id="cd18190">
    <property type="entry name" value="BTB_POZ_ETO1-like"/>
    <property type="match status" value="1"/>
</dbReference>
<dbReference type="FunFam" id="1.25.40.10:FF:000965">
    <property type="entry name" value="Ethylene-overproduction protein 1"/>
    <property type="match status" value="1"/>
</dbReference>
<dbReference type="FunFam" id="3.30.710.10:FF:000208">
    <property type="entry name" value="Ethylene-overproduction protein 1"/>
    <property type="match status" value="1"/>
</dbReference>
<dbReference type="FunFam" id="1.25.40.10:FF:000521">
    <property type="entry name" value="ETO1-like protein 1"/>
    <property type="match status" value="1"/>
</dbReference>
<dbReference type="Gene3D" id="3.30.710.10">
    <property type="entry name" value="Potassium Channel Kv1.1, Chain A"/>
    <property type="match status" value="1"/>
</dbReference>
<dbReference type="Gene3D" id="1.25.40.10">
    <property type="entry name" value="Tetratricopeptide repeat domain"/>
    <property type="match status" value="3"/>
</dbReference>
<dbReference type="InterPro" id="IPR000210">
    <property type="entry name" value="BTB/POZ_dom"/>
</dbReference>
<dbReference type="InterPro" id="IPR044631">
    <property type="entry name" value="ETO1-like"/>
</dbReference>
<dbReference type="InterPro" id="IPR011333">
    <property type="entry name" value="SKP1/BTB/POZ_sf"/>
</dbReference>
<dbReference type="InterPro" id="IPR011990">
    <property type="entry name" value="TPR-like_helical_dom_sf"/>
</dbReference>
<dbReference type="InterPro" id="IPR019734">
    <property type="entry name" value="TPR_rpt"/>
</dbReference>
<dbReference type="PANTHER" id="PTHR44203:SF8">
    <property type="entry name" value="ETHYLENE-OVERPRODUCTION PROTEIN 1"/>
    <property type="match status" value="1"/>
</dbReference>
<dbReference type="PANTHER" id="PTHR44203">
    <property type="entry name" value="ETO1-RELATED"/>
    <property type="match status" value="1"/>
</dbReference>
<dbReference type="Pfam" id="PF13181">
    <property type="entry name" value="TPR_8"/>
    <property type="match status" value="1"/>
</dbReference>
<dbReference type="SMART" id="SM00225">
    <property type="entry name" value="BTB"/>
    <property type="match status" value="1"/>
</dbReference>
<dbReference type="SMART" id="SM00028">
    <property type="entry name" value="TPR"/>
    <property type="match status" value="5"/>
</dbReference>
<dbReference type="SUPFAM" id="SSF54695">
    <property type="entry name" value="POZ domain"/>
    <property type="match status" value="1"/>
</dbReference>
<dbReference type="SUPFAM" id="SSF48452">
    <property type="entry name" value="TPR-like"/>
    <property type="match status" value="2"/>
</dbReference>
<dbReference type="PROSITE" id="PS50005">
    <property type="entry name" value="TPR"/>
    <property type="match status" value="4"/>
</dbReference>
<gene>
    <name type="primary">ETO1</name>
    <name type="ordered locus">At3g51770</name>
    <name type="ORF">ATEM1.2</name>
</gene>
<reference key="1">
    <citation type="journal article" date="2004" name="Nature">
        <title>Regulation of ethylene gas biosynthesis by the Arabidopsis ETO1 protein.</title>
        <authorList>
            <person name="Wang K.L.-C."/>
            <person name="Yoshida H."/>
            <person name="Lurin C."/>
            <person name="Ecker J.R."/>
        </authorList>
    </citation>
    <scope>NUCLEOTIDE SEQUENCE [MRNA]</scope>
    <scope>FUNCTION</scope>
    <scope>INTERACTION WITH ACS5 AND CUL3A</scope>
    <scope>MUTAGENESIS OF PHE-466</scope>
</reference>
<reference key="2">
    <citation type="journal article" date="1999" name="Plant Mol. Biol.">
        <title>Fine sequence analysis of 60 kb around the Arabidopsis thaliana AtEm1 locus on chromosome III.</title>
        <authorList>
            <person name="Comella P."/>
            <person name="Wu H.-J."/>
            <person name="Laudie M."/>
            <person name="Berger C."/>
            <person name="Cooke R."/>
            <person name="Delseny M."/>
            <person name="Grellet F."/>
        </authorList>
    </citation>
    <scope>NUCLEOTIDE SEQUENCE [LARGE SCALE GENOMIC DNA]</scope>
    <source>
        <strain>cv. Columbia</strain>
    </source>
</reference>
<reference key="3">
    <citation type="journal article" date="2017" name="Plant J.">
        <title>Araport11: a complete reannotation of the Arabidopsis thaliana reference genome.</title>
        <authorList>
            <person name="Cheng C.Y."/>
            <person name="Krishnakumar V."/>
            <person name="Chan A.P."/>
            <person name="Thibaud-Nissen F."/>
            <person name="Schobel S."/>
            <person name="Town C.D."/>
        </authorList>
    </citation>
    <scope>GENOME REANNOTATION</scope>
    <scope>SEQUENCE REVISION</scope>
    <source>
        <strain>cv. Columbia</strain>
    </source>
</reference>
<reference key="4">
    <citation type="journal article" date="2005" name="BMC Plant Biol.">
        <title>Arabidopsis ETO1 specifically interacts with and negatively regulates type 2 1-aminocyclopropane-1-carboxylate synthases.</title>
        <authorList>
            <person name="Yoshida H."/>
            <person name="Nagata M."/>
            <person name="Saito K."/>
            <person name="Wang K.L."/>
            <person name="Ecker J.R."/>
        </authorList>
    </citation>
    <scope>FUNCTION</scope>
</reference>
<reference key="5">
    <citation type="journal article" date="2005" name="J. Biol. Chem.">
        <title>Cullins 3a and 3b assemble with members of the broad complex/tramtrack/bric-a-brac (BTB) protein family to form essential ubiquitin-protein ligases (E3s) in Arabidopsis.</title>
        <authorList>
            <person name="Gingerich D.J."/>
            <person name="Gagne J.M."/>
            <person name="Salter D.W."/>
            <person name="Hellmann H."/>
            <person name="Estelle M."/>
            <person name="Ma L."/>
            <person name="Vierstra R.D."/>
        </authorList>
    </citation>
    <scope>DOMAIN BTB</scope>
</reference>
<reference key="6">
    <citation type="journal article" date="2009" name="Plant J.">
        <title>The BTB ubiquitin ligases ETO1, EOL1 and EOL2 act collectively to regulate ethylene biosynthesis in Arabidopsis by controlling type-2 ACC synthase levels.</title>
        <authorList>
            <person name="Christians M.J."/>
            <person name="Gingerich D.J."/>
            <person name="Hansen M."/>
            <person name="Binder B.M."/>
            <person name="Kieber J.J."/>
            <person name="Vierstra R.D."/>
        </authorList>
    </citation>
    <scope>FUNCTION</scope>
    <scope>INTERACTION WITH ACS4; ACS5 AND ACS9</scope>
    <scope>DISRUPTION PHENOTYPE</scope>
    <scope>TISSUE SPECIFICITY</scope>
</reference>
<proteinExistence type="evidence at protein level"/>
<keyword id="KW-0025">Alternative splicing</keyword>
<keyword id="KW-0175">Coiled coil</keyword>
<keyword id="KW-0936">Ethylene signaling pathway</keyword>
<keyword id="KW-1185">Reference proteome</keyword>
<keyword id="KW-0677">Repeat</keyword>
<keyword id="KW-0802">TPR repeat</keyword>
<keyword id="KW-0833">Ubl conjugation pathway</keyword>
<sequence>MRSLKLAEGCKGTQVYALNPSAPTPPPPPGNSSTGGGGGGGSGGGTGGVGDKLLQHLSDHLRVNSVRSKSSRTYPPPTQPNAVVSPEFLLPCGLPVTDLLEPQIDPCLKFVDLVEKMAQVYRRIENCSQFEKSGAYLEQCAIFRGISDPKLFRRSLRSSRQHAVDVHAKVVLASWLRFERREDELIGTTSMDCCGRNLECPKATLVSGYDPESVYDPCVCSGASRSEMMNEDECSTSQEVDYDMSFCIGDEEVRCVRYKIASLSRPFKAMLYGGFREMKRATINFTQNGISVEGMRAAEIFSRTNRLDNFPPNVVLELLKLANRFCCDELKSACDSHLAHLVNSLDEAMLLIEYGLEEAAYLLVAACLQVFLRELPSSMHNPNVIKIFCSAEGRERLASLGHASFTLYFFLSQIAMEDDMKSNTTVMLLERLVECAVDSWEKQLAYHQLGVVMLERKEYKDAQRWFNAAVEAGHLYSLVGVARTKFKRDHRYSAYKIINSLISDHKATGWMHQERSLYCSGKEKLLDLDTATEFDPTLTFPYKFRAVALVEENQFGAAIAELNKILGFKASPDCLEMRAWISIGMEDYEGALKDIRALLTLEPNFMMFNWKIHGDHMVELLRPLAQQWSQADCWMQLYDRWSSVDDIGSLAVVHHMLANDPGKSLLRFRQSLLLLRLNCQKAAMRSLRLARNHSKSEHERLVYEGWILYDTGHREEALAKAEESISIQRSFEAFFLKAYALADSTLDPDSSNYVIQLLQEALKCPSDGLRKGQALNNLGSVYVDCEKLDLAADCYTNALTIKHTRAHQGLARVYHLKNQRKAAYDEMTKLIEKAQNNASAYEKRSEYCDREMAQSDLCLATQLDPLRTYPYRYRAAVLMDDHKESEAIDELSRAISFKPDLQLLHLRAAFYDSMGEGASAIKDCEAALCIDPGHADTLELYHKAREPNDQK</sequence>
<name>ETO1_ARATH</name>